<feature type="chain" id="PRO_0000142545" description="3'(2'),5'-bisphosphate nucleotidase CysQ">
    <location>
        <begin position="1"/>
        <end position="246"/>
    </location>
</feature>
<feature type="binding site" evidence="1">
    <location>
        <position position="64"/>
    </location>
    <ligand>
        <name>Mg(2+)</name>
        <dbReference type="ChEBI" id="CHEBI:18420"/>
        <label>1</label>
    </ligand>
</feature>
<feature type="binding site" evidence="1">
    <location>
        <position position="64"/>
    </location>
    <ligand>
        <name>substrate</name>
    </ligand>
</feature>
<feature type="binding site" evidence="1">
    <location>
        <position position="83"/>
    </location>
    <ligand>
        <name>Mg(2+)</name>
        <dbReference type="ChEBI" id="CHEBI:18420"/>
        <label>1</label>
    </ligand>
</feature>
<feature type="binding site" evidence="1">
    <location>
        <position position="83"/>
    </location>
    <ligand>
        <name>Mg(2+)</name>
        <dbReference type="ChEBI" id="CHEBI:18420"/>
        <label>2</label>
    </ligand>
</feature>
<feature type="binding site" evidence="1">
    <location>
        <begin position="85"/>
        <end position="88"/>
    </location>
    <ligand>
        <name>substrate</name>
    </ligand>
</feature>
<feature type="binding site" evidence="1">
    <location>
        <position position="85"/>
    </location>
    <ligand>
        <name>Mg(2+)</name>
        <dbReference type="ChEBI" id="CHEBI:18420"/>
        <label>1</label>
    </ligand>
</feature>
<feature type="binding site" evidence="1">
    <location>
        <position position="86"/>
    </location>
    <ligand>
        <name>Mg(2+)</name>
        <dbReference type="ChEBI" id="CHEBI:18420"/>
        <label>2</label>
    </ligand>
</feature>
<feature type="binding site" evidence="1">
    <location>
        <position position="205"/>
    </location>
    <ligand>
        <name>Mg(2+)</name>
        <dbReference type="ChEBI" id="CHEBI:18420"/>
        <label>2</label>
    </ligand>
</feature>
<feature type="binding site" evidence="1">
    <location>
        <position position="205"/>
    </location>
    <ligand>
        <name>substrate</name>
    </ligand>
</feature>
<reference key="1">
    <citation type="journal article" date="2001" name="Nature">
        <title>Complete genome sequence of Salmonella enterica serovar Typhimurium LT2.</title>
        <authorList>
            <person name="McClelland M."/>
            <person name="Sanderson K.E."/>
            <person name="Spieth J."/>
            <person name="Clifton S.W."/>
            <person name="Latreille P."/>
            <person name="Courtney L."/>
            <person name="Porwollik S."/>
            <person name="Ali J."/>
            <person name="Dante M."/>
            <person name="Du F."/>
            <person name="Hou S."/>
            <person name="Layman D."/>
            <person name="Leonard S."/>
            <person name="Nguyen C."/>
            <person name="Scott K."/>
            <person name="Holmes A."/>
            <person name="Grewal N."/>
            <person name="Mulvaney E."/>
            <person name="Ryan E."/>
            <person name="Sun H."/>
            <person name="Florea L."/>
            <person name="Miller W."/>
            <person name="Stoneking T."/>
            <person name="Nhan M."/>
            <person name="Waterston R."/>
            <person name="Wilson R.K."/>
        </authorList>
    </citation>
    <scope>NUCLEOTIDE SEQUENCE [LARGE SCALE GENOMIC DNA]</scope>
    <source>
        <strain>LT2 / SGSC1412 / ATCC 700720</strain>
    </source>
</reference>
<reference key="2">
    <citation type="journal article" date="1990" name="Mol. Gen. Genet.">
        <title>Transcription and regulation of the cpdB gene in Escherichia coli K12 and Salmonella typhimurium LT2: evidence for modulation of constitutive promoters by cyclic AMP-CRP complex.</title>
        <authorList>
            <person name="Liu J."/>
            <person name="Beacham I.R."/>
        </authorList>
    </citation>
    <scope>NUCLEOTIDE SEQUENCE [GENOMIC DNA] OF 1-198</scope>
    <source>
        <strain>LT2</strain>
    </source>
</reference>
<comment type="function">
    <text evidence="1">Converts adenosine-3',5'-bisphosphate (PAP) to AMP.</text>
</comment>
<comment type="catalytic activity">
    <reaction evidence="1">
        <text>adenosine 3',5'-bisphosphate + H2O = AMP + phosphate</text>
        <dbReference type="Rhea" id="RHEA:10040"/>
        <dbReference type="ChEBI" id="CHEBI:15377"/>
        <dbReference type="ChEBI" id="CHEBI:43474"/>
        <dbReference type="ChEBI" id="CHEBI:58343"/>
        <dbReference type="ChEBI" id="CHEBI:456215"/>
        <dbReference type="EC" id="3.1.3.7"/>
    </reaction>
</comment>
<comment type="cofactor">
    <cofactor evidence="1">
        <name>Mg(2+)</name>
        <dbReference type="ChEBI" id="CHEBI:18420"/>
    </cofactor>
</comment>
<comment type="subcellular location">
    <subcellularLocation>
        <location evidence="1">Cell inner membrane</location>
        <topology evidence="1">Peripheral membrane protein</topology>
        <orientation evidence="1">Cytoplasmic side</orientation>
    </subcellularLocation>
</comment>
<comment type="induction">
    <text>Strongly repressed during nitrogen excess.</text>
</comment>
<comment type="similarity">
    <text evidence="1 2">Belongs to the inositol monophosphatase superfamily. CysQ family.</text>
</comment>
<name>CYSQ_SALTY</name>
<accession>P26264</accession>
<proteinExistence type="evidence at transcript level"/>
<dbReference type="EC" id="3.1.3.7" evidence="1"/>
<dbReference type="EMBL" id="AE006468">
    <property type="protein sequence ID" value="AAL23224.1"/>
    <property type="molecule type" value="Genomic_DNA"/>
</dbReference>
<dbReference type="EMBL" id="X54009">
    <property type="protein sequence ID" value="CAA37955.1"/>
    <property type="molecule type" value="Genomic_DNA"/>
</dbReference>
<dbReference type="RefSeq" id="NP_463265.1">
    <property type="nucleotide sequence ID" value="NC_003197.2"/>
</dbReference>
<dbReference type="RefSeq" id="WP_000893398.1">
    <property type="nucleotide sequence ID" value="NC_003197.2"/>
</dbReference>
<dbReference type="SMR" id="P26264"/>
<dbReference type="STRING" id="99287.STM4404"/>
<dbReference type="PaxDb" id="99287-STM4404"/>
<dbReference type="GeneID" id="1255930"/>
<dbReference type="KEGG" id="stm:STM4404"/>
<dbReference type="PATRIC" id="fig|99287.12.peg.4630"/>
<dbReference type="HOGENOM" id="CLU_044118_3_0_6"/>
<dbReference type="OMA" id="WLWILDP"/>
<dbReference type="PhylomeDB" id="P26264"/>
<dbReference type="BioCyc" id="SENT99287:STM4404-MONOMER"/>
<dbReference type="Proteomes" id="UP000001014">
    <property type="component" value="Chromosome"/>
</dbReference>
<dbReference type="GO" id="GO:0005886">
    <property type="term" value="C:plasma membrane"/>
    <property type="evidence" value="ECO:0007669"/>
    <property type="project" value="UniProtKB-SubCell"/>
</dbReference>
<dbReference type="GO" id="GO:0008441">
    <property type="term" value="F:3'(2'),5'-bisphosphate nucleotidase activity"/>
    <property type="evidence" value="ECO:0000318"/>
    <property type="project" value="GO_Central"/>
</dbReference>
<dbReference type="GO" id="GO:0000287">
    <property type="term" value="F:magnesium ion binding"/>
    <property type="evidence" value="ECO:0007669"/>
    <property type="project" value="UniProtKB-UniRule"/>
</dbReference>
<dbReference type="GO" id="GO:0050427">
    <property type="term" value="P:3'-phosphoadenosine 5'-phosphosulfate metabolic process"/>
    <property type="evidence" value="ECO:0000318"/>
    <property type="project" value="GO_Central"/>
</dbReference>
<dbReference type="GO" id="GO:0046854">
    <property type="term" value="P:phosphatidylinositol phosphate biosynthetic process"/>
    <property type="evidence" value="ECO:0007669"/>
    <property type="project" value="InterPro"/>
</dbReference>
<dbReference type="GO" id="GO:0000103">
    <property type="term" value="P:sulfate assimilation"/>
    <property type="evidence" value="ECO:0000318"/>
    <property type="project" value="GO_Central"/>
</dbReference>
<dbReference type="CDD" id="cd01638">
    <property type="entry name" value="CysQ"/>
    <property type="match status" value="1"/>
</dbReference>
<dbReference type="FunFam" id="3.30.540.10:FF:000007">
    <property type="entry name" value="3'(2'),5'-bisphosphate nucleotidase CysQ"/>
    <property type="match status" value="1"/>
</dbReference>
<dbReference type="FunFam" id="3.40.190.80:FF:000005">
    <property type="entry name" value="3'(2'),5'-bisphosphate nucleotidase CysQ"/>
    <property type="match status" value="1"/>
</dbReference>
<dbReference type="Gene3D" id="3.40.190.80">
    <property type="match status" value="1"/>
</dbReference>
<dbReference type="Gene3D" id="3.30.540.10">
    <property type="entry name" value="Fructose-1,6-Bisphosphatase, subunit A, domain 1"/>
    <property type="match status" value="1"/>
</dbReference>
<dbReference type="HAMAP" id="MF_02095">
    <property type="entry name" value="CysQ"/>
    <property type="match status" value="1"/>
</dbReference>
<dbReference type="InterPro" id="IPR006240">
    <property type="entry name" value="CysQ"/>
</dbReference>
<dbReference type="InterPro" id="IPR050725">
    <property type="entry name" value="CysQ/Inositol_MonoPase"/>
</dbReference>
<dbReference type="InterPro" id="IPR020583">
    <property type="entry name" value="Inositol_monoP_metal-BS"/>
</dbReference>
<dbReference type="InterPro" id="IPR000760">
    <property type="entry name" value="Inositol_monophosphatase-like"/>
</dbReference>
<dbReference type="InterPro" id="IPR020550">
    <property type="entry name" value="Inositol_monophosphatase_CS"/>
</dbReference>
<dbReference type="NCBIfam" id="TIGR01331">
    <property type="entry name" value="bisphos_cysQ"/>
    <property type="match status" value="1"/>
</dbReference>
<dbReference type="NCBIfam" id="NF008182">
    <property type="entry name" value="PRK10931.1"/>
    <property type="match status" value="1"/>
</dbReference>
<dbReference type="PANTHER" id="PTHR43028">
    <property type="entry name" value="3'(2'),5'-BISPHOSPHATE NUCLEOTIDASE 1"/>
    <property type="match status" value="1"/>
</dbReference>
<dbReference type="PANTHER" id="PTHR43028:SF5">
    <property type="entry name" value="3'(2'),5'-BISPHOSPHATE NUCLEOTIDASE 1"/>
    <property type="match status" value="1"/>
</dbReference>
<dbReference type="Pfam" id="PF00459">
    <property type="entry name" value="Inositol_P"/>
    <property type="match status" value="1"/>
</dbReference>
<dbReference type="SUPFAM" id="SSF56655">
    <property type="entry name" value="Carbohydrate phosphatase"/>
    <property type="match status" value="1"/>
</dbReference>
<dbReference type="PROSITE" id="PS00629">
    <property type="entry name" value="IMP_1"/>
    <property type="match status" value="1"/>
</dbReference>
<dbReference type="PROSITE" id="PS00630">
    <property type="entry name" value="IMP_2"/>
    <property type="match status" value="1"/>
</dbReference>
<gene>
    <name evidence="1" type="primary">cysQ</name>
    <name type="ordered locus">STM4404</name>
</gene>
<protein>
    <recommendedName>
        <fullName evidence="1">3'(2'),5'-bisphosphate nucleotidase CysQ</fullName>
        <ecNumber evidence="1">3.1.3.7</ecNumber>
    </recommendedName>
    <alternativeName>
        <fullName evidence="1">3'(2'),5-bisphosphonucleoside 3'(2')-phosphohydrolase</fullName>
    </alternativeName>
    <alternativeName>
        <fullName evidence="1">3'-phosphoadenosine 5'-phosphate phosphatase</fullName>
        <shortName evidence="1">PAP phosphatase</shortName>
    </alternativeName>
</protein>
<evidence type="ECO:0000255" key="1">
    <source>
        <dbReference type="HAMAP-Rule" id="MF_02095"/>
    </source>
</evidence>
<evidence type="ECO:0000305" key="2"/>
<keyword id="KW-0997">Cell inner membrane</keyword>
<keyword id="KW-1003">Cell membrane</keyword>
<keyword id="KW-0378">Hydrolase</keyword>
<keyword id="KW-0460">Magnesium</keyword>
<keyword id="KW-0472">Membrane</keyword>
<keyword id="KW-0479">Metal-binding</keyword>
<keyword id="KW-1185">Reference proteome</keyword>
<sequence>MLEQVCQLARNAGDAIMQVYDGAKPMEYARKQDDSPVTAADIAAHTVILEGLRTLTPDIPVLSEEDPPAWEVRQHWQRYWLVDPLDGTKEFIKRNGEFTVNIALIEQGKPVLGVVYAPVLKVMYYAAEGKAWKEECGVRKQIQVRDARPPLVVISRSHTDDELTEYLQQLGEHQTTSIGSSLKFCLVAEGQAQLYPRFGPTSVWDTAAGHAIAVAAGAHVHDWQGKTLDYTPRESFLNPGFRVTIY</sequence>
<organism>
    <name type="scientific">Salmonella typhimurium (strain LT2 / SGSC1412 / ATCC 700720)</name>
    <dbReference type="NCBI Taxonomy" id="99287"/>
    <lineage>
        <taxon>Bacteria</taxon>
        <taxon>Pseudomonadati</taxon>
        <taxon>Pseudomonadota</taxon>
        <taxon>Gammaproteobacteria</taxon>
        <taxon>Enterobacterales</taxon>
        <taxon>Enterobacteriaceae</taxon>
        <taxon>Salmonella</taxon>
    </lineage>
</organism>